<organism>
    <name type="scientific">Pyrobaculum aerophilum (strain ATCC 51768 / DSM 7523 / JCM 9630 / CIP 104966 / NBRC 100827 / IM2)</name>
    <dbReference type="NCBI Taxonomy" id="178306"/>
    <lineage>
        <taxon>Archaea</taxon>
        <taxon>Thermoproteota</taxon>
        <taxon>Thermoprotei</taxon>
        <taxon>Thermoproteales</taxon>
        <taxon>Thermoproteaceae</taxon>
        <taxon>Pyrobaculum</taxon>
    </lineage>
</organism>
<comment type="function">
    <text evidence="1">Catalyzes the attachment of L-aspartate to tRNA(Asp) in a two-step reaction: L-aspartate is first activated by ATP to form Asp-AMP and then transferred to the acceptor end of tRNA(Asp).</text>
</comment>
<comment type="catalytic activity">
    <reaction evidence="1">
        <text>tRNA(Asp) + L-aspartate + ATP = L-aspartyl-tRNA(Asp) + AMP + diphosphate</text>
        <dbReference type="Rhea" id="RHEA:19649"/>
        <dbReference type="Rhea" id="RHEA-COMP:9660"/>
        <dbReference type="Rhea" id="RHEA-COMP:9678"/>
        <dbReference type="ChEBI" id="CHEBI:29991"/>
        <dbReference type="ChEBI" id="CHEBI:30616"/>
        <dbReference type="ChEBI" id="CHEBI:33019"/>
        <dbReference type="ChEBI" id="CHEBI:78442"/>
        <dbReference type="ChEBI" id="CHEBI:78516"/>
        <dbReference type="ChEBI" id="CHEBI:456215"/>
        <dbReference type="EC" id="6.1.1.12"/>
    </reaction>
</comment>
<comment type="cofactor">
    <cofactor evidence="1">
        <name>Mg(2+)</name>
        <dbReference type="ChEBI" id="CHEBI:18420"/>
    </cofactor>
    <text evidence="1">Binds 3 Mg(2+) cations per subunit. The strongest magnesium site (Mg1) is bound to the beta- and gamma-phosphates of ATP and four water molecules complete its coordination sphere.</text>
</comment>
<comment type="subunit">
    <text evidence="1">Homodimer.</text>
</comment>
<comment type="subcellular location">
    <subcellularLocation>
        <location evidence="1">Cytoplasm</location>
    </subcellularLocation>
</comment>
<comment type="similarity">
    <text evidence="1">Belongs to the class-II aminoacyl-tRNA synthetase family. Type 2 subfamily.</text>
</comment>
<proteinExistence type="evidence at protein level"/>
<accession>Q8ZYM8</accession>
<name>SYD_PYRAE</name>
<protein>
    <recommendedName>
        <fullName evidence="1">Aspartate--tRNA(Asp) ligase</fullName>
        <ecNumber evidence="1">6.1.1.12</ecNumber>
    </recommendedName>
    <alternativeName>
        <fullName evidence="1">Aspartyl-tRNA synthetase</fullName>
        <shortName evidence="1">AspRS</shortName>
    </alternativeName>
    <alternativeName>
        <fullName evidence="1">Discriminating aspartyl-tRNA synthetase</fullName>
        <shortName evidence="1">D-AspRS</shortName>
    </alternativeName>
</protein>
<keyword id="KW-0002">3D-structure</keyword>
<keyword id="KW-0030">Aminoacyl-tRNA synthetase</keyword>
<keyword id="KW-0067">ATP-binding</keyword>
<keyword id="KW-0963">Cytoplasm</keyword>
<keyword id="KW-0436">Ligase</keyword>
<keyword id="KW-0460">Magnesium</keyword>
<keyword id="KW-0479">Metal-binding</keyword>
<keyword id="KW-0547">Nucleotide-binding</keyword>
<keyword id="KW-0648">Protein biosynthesis</keyword>
<keyword id="KW-1185">Reference proteome</keyword>
<dbReference type="EC" id="6.1.1.12" evidence="1"/>
<dbReference type="EMBL" id="AE009441">
    <property type="protein sequence ID" value="AAL62965.1"/>
    <property type="molecule type" value="Genomic_DNA"/>
</dbReference>
<dbReference type="RefSeq" id="WP_011007437.1">
    <property type="nucleotide sequence ID" value="NC_003364.1"/>
</dbReference>
<dbReference type="PDB" id="4GLA">
    <property type="method" value="X-ray"/>
    <property type="resolution" value="2.75 A"/>
    <property type="chains" value="C/D=2-104"/>
</dbReference>
<dbReference type="PDBsum" id="4GLA"/>
<dbReference type="SMR" id="Q8ZYM8"/>
<dbReference type="FunCoup" id="Q8ZYM8">
    <property type="interactions" value="278"/>
</dbReference>
<dbReference type="STRING" id="178306.PAE0703"/>
<dbReference type="EnsemblBacteria" id="AAL62965">
    <property type="protein sequence ID" value="AAL62965"/>
    <property type="gene ID" value="PAE0703"/>
</dbReference>
<dbReference type="GeneID" id="1465191"/>
<dbReference type="KEGG" id="pai:PAE0703"/>
<dbReference type="PATRIC" id="fig|178306.9.peg.510"/>
<dbReference type="eggNOG" id="arCOG00406">
    <property type="taxonomic scope" value="Archaea"/>
</dbReference>
<dbReference type="HOGENOM" id="CLU_004553_2_1_2"/>
<dbReference type="InParanoid" id="Q8ZYM8"/>
<dbReference type="EvolutionaryTrace" id="Q8ZYM8"/>
<dbReference type="Proteomes" id="UP000002439">
    <property type="component" value="Chromosome"/>
</dbReference>
<dbReference type="GO" id="GO:0017101">
    <property type="term" value="C:aminoacyl-tRNA synthetase multienzyme complex"/>
    <property type="evidence" value="ECO:0000318"/>
    <property type="project" value="GO_Central"/>
</dbReference>
<dbReference type="GO" id="GO:0005829">
    <property type="term" value="C:cytosol"/>
    <property type="evidence" value="ECO:0000318"/>
    <property type="project" value="GO_Central"/>
</dbReference>
<dbReference type="GO" id="GO:0004815">
    <property type="term" value="F:aspartate-tRNA ligase activity"/>
    <property type="evidence" value="ECO:0000318"/>
    <property type="project" value="GO_Central"/>
</dbReference>
<dbReference type="GO" id="GO:0005524">
    <property type="term" value="F:ATP binding"/>
    <property type="evidence" value="ECO:0007669"/>
    <property type="project" value="UniProtKB-UniRule"/>
</dbReference>
<dbReference type="GO" id="GO:0000287">
    <property type="term" value="F:magnesium ion binding"/>
    <property type="evidence" value="ECO:0007669"/>
    <property type="project" value="UniProtKB-UniRule"/>
</dbReference>
<dbReference type="GO" id="GO:0003723">
    <property type="term" value="F:RNA binding"/>
    <property type="evidence" value="ECO:0000318"/>
    <property type="project" value="GO_Central"/>
</dbReference>
<dbReference type="GO" id="GO:0006422">
    <property type="term" value="P:aspartyl-tRNA aminoacylation"/>
    <property type="evidence" value="ECO:0000318"/>
    <property type="project" value="GO_Central"/>
</dbReference>
<dbReference type="CDD" id="cd00776">
    <property type="entry name" value="AsxRS_core"/>
    <property type="match status" value="1"/>
</dbReference>
<dbReference type="CDD" id="cd04316">
    <property type="entry name" value="ND_PkAspRS_like_N"/>
    <property type="match status" value="1"/>
</dbReference>
<dbReference type="FunFam" id="3.30.930.10:FF:000038">
    <property type="entry name" value="Aspartate--tRNA ligase"/>
    <property type="match status" value="1"/>
</dbReference>
<dbReference type="FunFam" id="2.40.50.140:FF:000324">
    <property type="entry name" value="Aspartate--tRNA(Asp/Asn) ligase"/>
    <property type="match status" value="1"/>
</dbReference>
<dbReference type="Gene3D" id="3.30.930.10">
    <property type="entry name" value="Bira Bifunctional Protein, Domain 2"/>
    <property type="match status" value="1"/>
</dbReference>
<dbReference type="Gene3D" id="2.40.50.140">
    <property type="entry name" value="Nucleic acid-binding proteins"/>
    <property type="match status" value="1"/>
</dbReference>
<dbReference type="HAMAP" id="MF_02075">
    <property type="entry name" value="Asp_tRNA_synth_type2"/>
    <property type="match status" value="1"/>
</dbReference>
<dbReference type="InterPro" id="IPR004364">
    <property type="entry name" value="Aa-tRNA-synt_II"/>
</dbReference>
<dbReference type="InterPro" id="IPR006195">
    <property type="entry name" value="aa-tRNA-synth_II"/>
</dbReference>
<dbReference type="InterPro" id="IPR045864">
    <property type="entry name" value="aa-tRNA-synth_II/BPL/LPL"/>
</dbReference>
<dbReference type="InterPro" id="IPR004523">
    <property type="entry name" value="Asp-tRNA_synthase_2"/>
</dbReference>
<dbReference type="InterPro" id="IPR002312">
    <property type="entry name" value="Asp/Asn-tRNA-synth_IIb"/>
</dbReference>
<dbReference type="InterPro" id="IPR012340">
    <property type="entry name" value="NA-bd_OB-fold"/>
</dbReference>
<dbReference type="InterPro" id="IPR004365">
    <property type="entry name" value="NA-bd_OB_tRNA"/>
</dbReference>
<dbReference type="NCBIfam" id="TIGR00458">
    <property type="entry name" value="aspS_nondisc"/>
    <property type="match status" value="1"/>
</dbReference>
<dbReference type="NCBIfam" id="NF003483">
    <property type="entry name" value="PRK05159.1"/>
    <property type="match status" value="1"/>
</dbReference>
<dbReference type="PANTHER" id="PTHR43450:SF1">
    <property type="entry name" value="ASPARTATE--TRNA LIGASE, CYTOPLASMIC"/>
    <property type="match status" value="1"/>
</dbReference>
<dbReference type="PANTHER" id="PTHR43450">
    <property type="entry name" value="ASPARTYL-TRNA SYNTHETASE"/>
    <property type="match status" value="1"/>
</dbReference>
<dbReference type="Pfam" id="PF00152">
    <property type="entry name" value="tRNA-synt_2"/>
    <property type="match status" value="1"/>
</dbReference>
<dbReference type="Pfam" id="PF01336">
    <property type="entry name" value="tRNA_anti-codon"/>
    <property type="match status" value="1"/>
</dbReference>
<dbReference type="PRINTS" id="PR01042">
    <property type="entry name" value="TRNASYNTHASP"/>
</dbReference>
<dbReference type="SUPFAM" id="SSF55681">
    <property type="entry name" value="Class II aaRS and biotin synthetases"/>
    <property type="match status" value="1"/>
</dbReference>
<dbReference type="SUPFAM" id="SSF50249">
    <property type="entry name" value="Nucleic acid-binding proteins"/>
    <property type="match status" value="1"/>
</dbReference>
<dbReference type="PROSITE" id="PS50862">
    <property type="entry name" value="AA_TRNA_LIGASE_II"/>
    <property type="match status" value="1"/>
</dbReference>
<reference key="1">
    <citation type="journal article" date="2002" name="Proc. Natl. Acad. Sci. U.S.A.">
        <title>Genome sequence of the hyperthermophilic crenarchaeon Pyrobaculum aerophilum.</title>
        <authorList>
            <person name="Fitz-Gibbon S.T."/>
            <person name="Ladner H."/>
            <person name="Kim U.-J."/>
            <person name="Stetter K.O."/>
            <person name="Simon M.I."/>
            <person name="Miller J.H."/>
        </authorList>
    </citation>
    <scope>NUCLEOTIDE SEQUENCE [LARGE SCALE GENOMIC DNA]</scope>
    <source>
        <strain>ATCC 51768 / DSM 7523 / JCM 9630 / CIP 104966 / NBRC 100827 / IM2</strain>
    </source>
</reference>
<evidence type="ECO:0000255" key="1">
    <source>
        <dbReference type="HAMAP-Rule" id="MF_02075"/>
    </source>
</evidence>
<evidence type="ECO:0007829" key="2">
    <source>
        <dbReference type="PDB" id="4GLA"/>
    </source>
</evidence>
<sequence>MYPKKTHWTAEITPNLHGTEVVVAGWVWELRDIGRVKFVVVRDREGFVQVTLKAGKTPDHLFKVFAELSREDVVVIKGIVEASKIAKSGVEIFPSEIWILNKAKPLPIDIWSETPDLATRLKWRSVDLKRPRNLVVFTVASAMLRSIREVLYGEGFVEVFTPKIIVTSTEGGAELFPVMYFERVAYLSQSPQLYKEQLTASLERVFEIGPAYRAEKHNTDYHLNEFISVDAEAAFMDYNDIMDILEKIMRRLASTVSEYAPKLEEVGIKALMELSNIPRVDYDEAVDRLRQLGYAVNWGDDFTVEMQKALMKYYGPVYFIVNFPASLRPFYTKRKDGEKSESYDLIINGIEVASGATRIHKRDELEEEMKKRGLDPRLFESHLSVFDYGMPPHAGFGLGFNRLVTALLGLDNVRHATLYPRDRYRVEP</sequence>
<gene>
    <name evidence="1" type="primary">aspS</name>
    <name type="ordered locus">PAE0703</name>
</gene>
<feature type="chain" id="PRO_0000111002" description="Aspartate--tRNA(Asp) ligase">
    <location>
        <begin position="1"/>
        <end position="428"/>
    </location>
</feature>
<feature type="region of interest" description="Aspartate" evidence="1">
    <location>
        <begin position="192"/>
        <end position="195"/>
    </location>
</feature>
<feature type="binding site" evidence="1">
    <location>
        <position position="170"/>
    </location>
    <ligand>
        <name>L-aspartate</name>
        <dbReference type="ChEBI" id="CHEBI:29991"/>
    </ligand>
</feature>
<feature type="binding site" evidence="1">
    <location>
        <begin position="213"/>
        <end position="215"/>
    </location>
    <ligand>
        <name>ATP</name>
        <dbReference type="ChEBI" id="CHEBI:30616"/>
    </ligand>
</feature>
<feature type="binding site" evidence="1">
    <location>
        <position position="213"/>
    </location>
    <ligand>
        <name>L-aspartate</name>
        <dbReference type="ChEBI" id="CHEBI:29991"/>
    </ligand>
</feature>
<feature type="binding site" evidence="1">
    <location>
        <position position="351"/>
    </location>
    <ligand>
        <name>ATP</name>
        <dbReference type="ChEBI" id="CHEBI:30616"/>
    </ligand>
</feature>
<feature type="binding site" evidence="1">
    <location>
        <position position="351"/>
    </location>
    <ligand>
        <name>Mg(2+)</name>
        <dbReference type="ChEBI" id="CHEBI:18420"/>
        <label>2</label>
    </ligand>
</feature>
<feature type="binding site" evidence="1">
    <location>
        <position position="351"/>
    </location>
    <ligand>
        <name>Mg(2+)</name>
        <dbReference type="ChEBI" id="CHEBI:18420"/>
        <label>3</label>
    </ligand>
</feature>
<feature type="binding site" evidence="1">
    <location>
        <position position="354"/>
    </location>
    <ligand>
        <name>L-aspartate</name>
        <dbReference type="ChEBI" id="CHEBI:29991"/>
    </ligand>
</feature>
<feature type="binding site" evidence="1">
    <location>
        <position position="354"/>
    </location>
    <ligand>
        <name>Mg(2+)</name>
        <dbReference type="ChEBI" id="CHEBI:18420"/>
        <label>2</label>
    </ligand>
</feature>
<feature type="binding site" evidence="1">
    <location>
        <position position="358"/>
    </location>
    <ligand>
        <name>L-aspartate</name>
        <dbReference type="ChEBI" id="CHEBI:29991"/>
    </ligand>
</feature>
<feature type="binding site" evidence="1">
    <location>
        <begin position="399"/>
        <end position="402"/>
    </location>
    <ligand>
        <name>ATP</name>
        <dbReference type="ChEBI" id="CHEBI:30616"/>
    </ligand>
</feature>
<feature type="site" description="Important for tRNA discrimination" evidence="1">
    <location>
        <position position="87"/>
    </location>
</feature>
<feature type="strand" evidence="2">
    <location>
        <begin position="20"/>
        <end position="32"/>
    </location>
</feature>
<feature type="strand" evidence="2">
    <location>
        <begin position="34"/>
        <end position="42"/>
    </location>
</feature>
<feature type="strand" evidence="2">
    <location>
        <begin position="48"/>
        <end position="53"/>
    </location>
</feature>
<feature type="turn" evidence="2">
    <location>
        <begin position="54"/>
        <end position="56"/>
    </location>
</feature>
<feature type="helix" evidence="2">
    <location>
        <begin position="60"/>
        <end position="65"/>
    </location>
</feature>
<feature type="strand" evidence="2">
    <location>
        <begin position="73"/>
        <end position="82"/>
    </location>
</feature>
<feature type="strand" evidence="2">
    <location>
        <begin position="84"/>
        <end position="87"/>
    </location>
</feature>
<feature type="strand" evidence="2">
    <location>
        <begin position="90"/>
        <end position="99"/>
    </location>
</feature>